<evidence type="ECO:0000255" key="1"/>
<evidence type="ECO:0000255" key="2">
    <source>
        <dbReference type="PROSITE-ProRule" id="PRU10059"/>
    </source>
</evidence>
<evidence type="ECO:0000255" key="3">
    <source>
        <dbReference type="PROSITE-ProRule" id="PRU10140"/>
    </source>
</evidence>
<evidence type="ECO:0000305" key="4"/>
<reference key="1">
    <citation type="journal article" date="2005" name="Nature">
        <title>The map-based sequence of the rice genome.</title>
        <authorList>
            <consortium name="International rice genome sequencing project (IRGSP)"/>
        </authorList>
    </citation>
    <scope>NUCLEOTIDE SEQUENCE [LARGE SCALE GENOMIC DNA]</scope>
    <source>
        <strain>cv. Nipponbare</strain>
    </source>
</reference>
<reference key="2">
    <citation type="journal article" date="2008" name="Nucleic Acids Res.">
        <title>The rice annotation project database (RAP-DB): 2008 update.</title>
        <authorList>
            <consortium name="The rice annotation project (RAP)"/>
        </authorList>
    </citation>
    <scope>GENOME REANNOTATION</scope>
    <source>
        <strain>cv. Nipponbare</strain>
    </source>
</reference>
<reference key="3">
    <citation type="journal article" date="2013" name="Rice">
        <title>Improvement of the Oryza sativa Nipponbare reference genome using next generation sequence and optical map data.</title>
        <authorList>
            <person name="Kawahara Y."/>
            <person name="de la Bastide M."/>
            <person name="Hamilton J.P."/>
            <person name="Kanamori H."/>
            <person name="McCombie W.R."/>
            <person name="Ouyang S."/>
            <person name="Schwartz D.C."/>
            <person name="Tanaka T."/>
            <person name="Wu J."/>
            <person name="Zhou S."/>
            <person name="Childs K.L."/>
            <person name="Davidson R.M."/>
            <person name="Lin H."/>
            <person name="Quesada-Ocampo L."/>
            <person name="Vaillancourt B."/>
            <person name="Sakai H."/>
            <person name="Lee S.S."/>
            <person name="Kim J."/>
            <person name="Numa H."/>
            <person name="Itoh T."/>
            <person name="Buell C.R."/>
            <person name="Matsumoto T."/>
        </authorList>
    </citation>
    <scope>GENOME REANNOTATION</scope>
    <source>
        <strain>cv. Nipponbare</strain>
    </source>
</reference>
<reference key="4">
    <citation type="journal article" date="2003" name="Science">
        <title>Collection, mapping, and annotation of over 28,000 cDNA clones from japonica rice.</title>
        <authorList>
            <consortium name="The rice full-length cDNA consortium"/>
        </authorList>
    </citation>
    <scope>NUCLEOTIDE SEQUENCE [LARGE SCALE MRNA]</scope>
    <source>
        <strain>cv. Nipponbare</strain>
    </source>
</reference>
<protein>
    <recommendedName>
        <fullName>Endoglucanase 18</fullName>
        <ecNumber>3.2.1.4</ecNumber>
    </recommendedName>
    <alternativeName>
        <fullName>Endo-1,4-beta glucanase 18</fullName>
    </alternativeName>
</protein>
<keyword id="KW-0119">Carbohydrate metabolism</keyword>
<keyword id="KW-0961">Cell wall biogenesis/degradation</keyword>
<keyword id="KW-0136">Cellulose degradation</keyword>
<keyword id="KW-0325">Glycoprotein</keyword>
<keyword id="KW-0326">Glycosidase</keyword>
<keyword id="KW-0378">Hydrolase</keyword>
<keyword id="KW-0472">Membrane</keyword>
<keyword id="KW-0624">Polysaccharide degradation</keyword>
<keyword id="KW-1185">Reference proteome</keyword>
<keyword id="KW-0735">Signal-anchor</keyword>
<keyword id="KW-0812">Transmembrane</keyword>
<keyword id="KW-1133">Transmembrane helix</keyword>
<comment type="catalytic activity">
    <reaction>
        <text>Endohydrolysis of (1-&gt;4)-beta-D-glucosidic linkages in cellulose, lichenin and cereal beta-D-glucans.</text>
        <dbReference type="EC" id="3.2.1.4"/>
    </reaction>
</comment>
<comment type="subcellular location">
    <subcellularLocation>
        <location>Membrane</location>
        <topology>Single-pass type II membrane protein</topology>
    </subcellularLocation>
</comment>
<comment type="similarity">
    <text evidence="3 4">Belongs to the glycosyl hydrolase 9 (cellulase E) family.</text>
</comment>
<dbReference type="EC" id="3.2.1.4"/>
<dbReference type="EMBL" id="AP003614">
    <property type="protein sequence ID" value="BAD53575.1"/>
    <property type="molecule type" value="Genomic_DNA"/>
</dbReference>
<dbReference type="EMBL" id="AP008212">
    <property type="protein sequence ID" value="BAF20497.1"/>
    <property type="molecule type" value="Genomic_DNA"/>
</dbReference>
<dbReference type="EMBL" id="AP014962">
    <property type="protein sequence ID" value="BAS99495.1"/>
    <property type="molecule type" value="Genomic_DNA"/>
</dbReference>
<dbReference type="EMBL" id="AK121369">
    <property type="status" value="NOT_ANNOTATED_CDS"/>
    <property type="molecule type" value="mRNA"/>
</dbReference>
<dbReference type="RefSeq" id="XP_015642677.1">
    <property type="nucleotide sequence ID" value="XM_015787191.1"/>
</dbReference>
<dbReference type="SMR" id="Q5Z9P8"/>
<dbReference type="FunCoup" id="Q5Z9P8">
    <property type="interactions" value="19"/>
</dbReference>
<dbReference type="STRING" id="39947.Q5Z9P8"/>
<dbReference type="CAZy" id="GH9">
    <property type="family name" value="Glycoside Hydrolase Family 9"/>
</dbReference>
<dbReference type="PaxDb" id="39947-Q5Z9P8"/>
<dbReference type="EnsemblPlants" id="Os06t0715300-01">
    <property type="protein sequence ID" value="Os06t0715300-01"/>
    <property type="gene ID" value="Os06g0715300"/>
</dbReference>
<dbReference type="Gramene" id="Os06t0715300-01">
    <property type="protein sequence ID" value="Os06t0715300-01"/>
    <property type="gene ID" value="Os06g0715300"/>
</dbReference>
<dbReference type="KEGG" id="dosa:Os06g0715300"/>
<dbReference type="eggNOG" id="ENOG502QRF6">
    <property type="taxonomic scope" value="Eukaryota"/>
</dbReference>
<dbReference type="HOGENOM" id="CLU_008926_1_4_1"/>
<dbReference type="InParanoid" id="Q5Z9P8"/>
<dbReference type="OMA" id="GHKWLET"/>
<dbReference type="OrthoDB" id="10257085at2759"/>
<dbReference type="Proteomes" id="UP000000763">
    <property type="component" value="Chromosome 6"/>
</dbReference>
<dbReference type="Proteomes" id="UP000059680">
    <property type="component" value="Chromosome 6"/>
</dbReference>
<dbReference type="GO" id="GO:0016020">
    <property type="term" value="C:membrane"/>
    <property type="evidence" value="ECO:0007669"/>
    <property type="project" value="UniProtKB-SubCell"/>
</dbReference>
<dbReference type="GO" id="GO:0008810">
    <property type="term" value="F:cellulase activity"/>
    <property type="evidence" value="ECO:0007669"/>
    <property type="project" value="UniProtKB-EC"/>
</dbReference>
<dbReference type="GO" id="GO:0071555">
    <property type="term" value="P:cell wall organization"/>
    <property type="evidence" value="ECO:0007669"/>
    <property type="project" value="UniProtKB-KW"/>
</dbReference>
<dbReference type="GO" id="GO:0030245">
    <property type="term" value="P:cellulose catabolic process"/>
    <property type="evidence" value="ECO:0007669"/>
    <property type="project" value="UniProtKB-KW"/>
</dbReference>
<dbReference type="FunFam" id="1.50.10.10:FF:000020">
    <property type="entry name" value="Endoglucanase"/>
    <property type="match status" value="1"/>
</dbReference>
<dbReference type="Gene3D" id="1.50.10.10">
    <property type="match status" value="1"/>
</dbReference>
<dbReference type="InterPro" id="IPR008928">
    <property type="entry name" value="6-hairpin_glycosidase_sf"/>
</dbReference>
<dbReference type="InterPro" id="IPR012341">
    <property type="entry name" value="6hp_glycosidase-like_sf"/>
</dbReference>
<dbReference type="InterPro" id="IPR001701">
    <property type="entry name" value="Glyco_hydro_9"/>
</dbReference>
<dbReference type="InterPro" id="IPR018221">
    <property type="entry name" value="Glyco_hydro_9_His_AS"/>
</dbReference>
<dbReference type="PANTHER" id="PTHR22298">
    <property type="entry name" value="ENDO-1,4-BETA-GLUCANASE"/>
    <property type="match status" value="1"/>
</dbReference>
<dbReference type="Pfam" id="PF00759">
    <property type="entry name" value="Glyco_hydro_9"/>
    <property type="match status" value="1"/>
</dbReference>
<dbReference type="SUPFAM" id="SSF48208">
    <property type="entry name" value="Six-hairpin glycosidases"/>
    <property type="match status" value="1"/>
</dbReference>
<dbReference type="PROSITE" id="PS60032">
    <property type="entry name" value="GH9_1"/>
    <property type="match status" value="1"/>
</dbReference>
<dbReference type="PROSITE" id="PS00592">
    <property type="entry name" value="GH9_2"/>
    <property type="match status" value="1"/>
</dbReference>
<organism>
    <name type="scientific">Oryza sativa subsp. japonica</name>
    <name type="common">Rice</name>
    <dbReference type="NCBI Taxonomy" id="39947"/>
    <lineage>
        <taxon>Eukaryota</taxon>
        <taxon>Viridiplantae</taxon>
        <taxon>Streptophyta</taxon>
        <taxon>Embryophyta</taxon>
        <taxon>Tracheophyta</taxon>
        <taxon>Spermatophyta</taxon>
        <taxon>Magnoliopsida</taxon>
        <taxon>Liliopsida</taxon>
        <taxon>Poales</taxon>
        <taxon>Poaceae</taxon>
        <taxon>BOP clade</taxon>
        <taxon>Oryzoideae</taxon>
        <taxon>Oryzeae</taxon>
        <taxon>Oryzinae</taxon>
        <taxon>Oryza</taxon>
        <taxon>Oryza sativa</taxon>
    </lineage>
</organism>
<sequence length="518" mass="56741">MANCVRCCCWLLVLMLMALAITAAVVFVRYKNGEGVFPFPGVPGAVDHKYADALAVALQFFQVQKSGKLVNNTIHWRGDSALDDGKEAGIDLSKGMYDAGDHMKFGFPMAFTATMLSWSVLEYGDAMRAADQRDSAIDALNWIMDYLVNAHPSDDVLYIQVGDPKADHKCWERPEKMKEKRPLTKITPKSPGSDVAAETAAAMAAASLVYKTINKTYSSSLLDHGERLFAFADKHRGSYTRTFPELSAFYNSTTYQDELLWAASWLYHATGNHSYLAYATGKNKDFADLGNPRYFSWDDKRAGTEVLLSRVSFFASQGSDVAQDDVLGMYKQTADAVMCILLPDSETAAFRTEGGLLYVAEWNSLQHPVASAFLAAVYSDYMQSSGKTELSCSGQGFSPADLRKFAKSQADYLLGSNPMKISYLVGYGDRYPEKVHHRGASIPEDVDTGCDGHKWLETSKPNPNVATGALVGGPYKNDSFVDERDNVMQNEATTYNSALVAGLLSALVSTSSLARSLS</sequence>
<accession>Q5Z9P8</accession>
<accession>A0A0P0X0U4</accession>
<accession>Q0D9H6</accession>
<name>GUN18_ORYSJ</name>
<proteinExistence type="evidence at transcript level"/>
<feature type="chain" id="PRO_0000249295" description="Endoglucanase 18">
    <location>
        <begin position="1"/>
        <end position="518"/>
    </location>
</feature>
<feature type="topological domain" description="Cytoplasmic" evidence="1">
    <location>
        <begin position="1"/>
        <end position="35"/>
    </location>
</feature>
<feature type="transmembrane region" description="Helical" evidence="1">
    <location>
        <begin position="36"/>
        <end position="56"/>
    </location>
</feature>
<feature type="topological domain" description="Extracellular" evidence="1">
    <location>
        <begin position="57"/>
        <end position="518"/>
    </location>
</feature>
<feature type="active site" description="Nucleophile" evidence="3">
    <location>
        <position position="101"/>
    </location>
</feature>
<feature type="active site" evidence="2">
    <location>
        <position position="436"/>
    </location>
</feature>
<feature type="active site" evidence="2">
    <location>
        <position position="482"/>
    </location>
</feature>
<feature type="active site" evidence="2">
    <location>
        <position position="491"/>
    </location>
</feature>
<feature type="glycosylation site" description="N-linked (GlcNAc...) asparagine" evidence="1">
    <location>
        <position position="71"/>
    </location>
</feature>
<feature type="glycosylation site" description="N-linked (GlcNAc...) asparagine" evidence="1">
    <location>
        <position position="214"/>
    </location>
</feature>
<feature type="glycosylation site" description="N-linked (GlcNAc...) asparagine" evidence="1">
    <location>
        <position position="251"/>
    </location>
</feature>
<feature type="glycosylation site" description="N-linked (GlcNAc...) asparagine" evidence="1">
    <location>
        <position position="272"/>
    </location>
</feature>
<feature type="glycosylation site" description="N-linked (GlcNAc...) asparagine" evidence="1">
    <location>
        <position position="477"/>
    </location>
</feature>
<feature type="sequence conflict" description="In Ref. 4; AK121369." evidence="4" ref="4">
    <original>C</original>
    <variation>Y</variation>
    <location>
        <position position="450"/>
    </location>
</feature>
<gene>
    <name type="ordered locus">Os06g0715300</name>
    <name type="ordered locus">LOC_Os06g50140</name>
    <name type="ORF">P0481E08.13</name>
</gene>